<proteinExistence type="evidence at protein level"/>
<dbReference type="EMBL" id="CP001956">
    <property type="protein sequence ID" value="ADE04578.1"/>
    <property type="molecule type" value="Genomic_DNA"/>
</dbReference>
<dbReference type="EMBL" id="AOHU01000041">
    <property type="protein sequence ID" value="ELY33433.1"/>
    <property type="molecule type" value="Genomic_DNA"/>
</dbReference>
<dbReference type="RefSeq" id="WP_004042096.1">
    <property type="nucleotide sequence ID" value="NC_013967.1"/>
</dbReference>
<dbReference type="PDB" id="4B46">
    <property type="method" value="X-ray"/>
    <property type="resolution" value="1.90 A"/>
    <property type="chains" value="A=1-395"/>
</dbReference>
<dbReference type="PDBsum" id="4B46"/>
<dbReference type="SMR" id="D4GVD7"/>
<dbReference type="STRING" id="309800.HVO_2204"/>
<dbReference type="PaxDb" id="309800-C498_06313"/>
<dbReference type="EnsemblBacteria" id="ADE04578">
    <property type="protein sequence ID" value="ADE04578"/>
    <property type="gene ID" value="HVO_2204"/>
</dbReference>
<dbReference type="GeneID" id="8924622"/>
<dbReference type="KEGG" id="hvo:HVO_2204"/>
<dbReference type="PATRIC" id="fig|309800.29.peg.1233"/>
<dbReference type="eggNOG" id="arCOG02202">
    <property type="taxonomic scope" value="Archaea"/>
</dbReference>
<dbReference type="HOGENOM" id="CLU_058152_0_0_2"/>
<dbReference type="OrthoDB" id="329751at2157"/>
<dbReference type="EvolutionaryTrace" id="D4GVD7"/>
<dbReference type="Proteomes" id="UP000008243">
    <property type="component" value="Chromosome"/>
</dbReference>
<dbReference type="Proteomes" id="UP000011532">
    <property type="component" value="Unassembled WGS sequence"/>
</dbReference>
<dbReference type="GO" id="GO:0032153">
    <property type="term" value="C:cell division site"/>
    <property type="evidence" value="ECO:0007669"/>
    <property type="project" value="TreeGrafter"/>
</dbReference>
<dbReference type="GO" id="GO:0005737">
    <property type="term" value="C:cytoplasm"/>
    <property type="evidence" value="ECO:0007669"/>
    <property type="project" value="UniProtKB-SubCell"/>
</dbReference>
<dbReference type="GO" id="GO:0005874">
    <property type="term" value="C:microtubule"/>
    <property type="evidence" value="ECO:0007669"/>
    <property type="project" value="InterPro"/>
</dbReference>
<dbReference type="GO" id="GO:0005525">
    <property type="term" value="F:GTP binding"/>
    <property type="evidence" value="ECO:0007669"/>
    <property type="project" value="UniProtKB-UniRule"/>
</dbReference>
<dbReference type="GO" id="GO:0003924">
    <property type="term" value="F:GTPase activity"/>
    <property type="evidence" value="ECO:0007669"/>
    <property type="project" value="InterPro"/>
</dbReference>
<dbReference type="GO" id="GO:0051301">
    <property type="term" value="P:cell division"/>
    <property type="evidence" value="ECO:0007669"/>
    <property type="project" value="TreeGrafter"/>
</dbReference>
<dbReference type="GO" id="GO:0007017">
    <property type="term" value="P:microtubule-based process"/>
    <property type="evidence" value="ECO:0007669"/>
    <property type="project" value="InterPro"/>
</dbReference>
<dbReference type="GO" id="GO:0008360">
    <property type="term" value="P:regulation of cell shape"/>
    <property type="evidence" value="ECO:0007669"/>
    <property type="project" value="UniProtKB-UniRule"/>
</dbReference>
<dbReference type="CDD" id="cd02202">
    <property type="entry name" value="CetZ_tubulin-like"/>
    <property type="match status" value="1"/>
</dbReference>
<dbReference type="FunFam" id="3.40.50.1440:FF:000051">
    <property type="entry name" value="Tubulin-like protein CetZ"/>
    <property type="match status" value="1"/>
</dbReference>
<dbReference type="Gene3D" id="3.30.1330.20">
    <property type="entry name" value="Tubulin/FtsZ, C-terminal domain"/>
    <property type="match status" value="1"/>
</dbReference>
<dbReference type="Gene3D" id="3.40.50.1440">
    <property type="entry name" value="Tubulin/FtsZ, GTPase domain"/>
    <property type="match status" value="1"/>
</dbReference>
<dbReference type="HAMAP" id="MF_01946">
    <property type="entry name" value="CetZ"/>
    <property type="match status" value="1"/>
</dbReference>
<dbReference type="InterPro" id="IPR032907">
    <property type="entry name" value="CetZ"/>
</dbReference>
<dbReference type="InterPro" id="IPR048737">
    <property type="entry name" value="CetZ_C"/>
</dbReference>
<dbReference type="InterPro" id="IPR045061">
    <property type="entry name" value="FtsZ/CetZ"/>
</dbReference>
<dbReference type="InterPro" id="IPR037103">
    <property type="entry name" value="Tubulin/FtsZ-like_C"/>
</dbReference>
<dbReference type="InterPro" id="IPR036525">
    <property type="entry name" value="Tubulin/FtsZ_GTPase_sf"/>
</dbReference>
<dbReference type="InterPro" id="IPR017975">
    <property type="entry name" value="Tubulin_CS"/>
</dbReference>
<dbReference type="InterPro" id="IPR003008">
    <property type="entry name" value="Tubulin_FtsZ_GTPase"/>
</dbReference>
<dbReference type="PANTHER" id="PTHR30314">
    <property type="entry name" value="CELL DIVISION PROTEIN FTSZ-RELATED"/>
    <property type="match status" value="1"/>
</dbReference>
<dbReference type="PANTHER" id="PTHR30314:SF10">
    <property type="entry name" value="TUBULIN-LIKE PROTEIN CETZ"/>
    <property type="match status" value="1"/>
</dbReference>
<dbReference type="Pfam" id="PF21011">
    <property type="entry name" value="CetZ_C"/>
    <property type="match status" value="1"/>
</dbReference>
<dbReference type="Pfam" id="PF00091">
    <property type="entry name" value="Tubulin"/>
    <property type="match status" value="1"/>
</dbReference>
<dbReference type="SMART" id="SM00864">
    <property type="entry name" value="Tubulin"/>
    <property type="match status" value="1"/>
</dbReference>
<dbReference type="SUPFAM" id="SSF52490">
    <property type="entry name" value="Tubulin nucleotide-binding domain-like"/>
    <property type="match status" value="1"/>
</dbReference>
<dbReference type="PROSITE" id="PS00227">
    <property type="entry name" value="TUBULIN"/>
    <property type="match status" value="1"/>
</dbReference>
<accession>D4GVD7</accession>
<gene>
    <name evidence="3" type="primary">cetZ1</name>
    <name evidence="5" type="synonym">ftsZ4</name>
    <name evidence="5" type="ordered locus">HVO_2204</name>
    <name evidence="6" type="ORF">C498_06313</name>
</gene>
<feature type="chain" id="PRO_0000432183" description="Tubulin-like protein CetZ1">
    <location>
        <begin position="1"/>
        <end position="395"/>
    </location>
</feature>
<feature type="binding site" evidence="1 2">
    <location>
        <begin position="10"/>
        <end position="14"/>
    </location>
    <ligand>
        <name>GTP</name>
        <dbReference type="ChEBI" id="CHEBI:37565"/>
    </ligand>
</feature>
<feature type="binding site" evidence="1 2">
    <location>
        <begin position="110"/>
        <end position="112"/>
    </location>
    <ligand>
        <name>GTP</name>
        <dbReference type="ChEBI" id="CHEBI:37565"/>
    </ligand>
</feature>
<feature type="binding site" evidence="1 2">
    <location>
        <position position="142"/>
    </location>
    <ligand>
        <name>GTP</name>
        <dbReference type="ChEBI" id="CHEBI:37565"/>
    </ligand>
</feature>
<feature type="binding site" evidence="1 2">
    <location>
        <position position="169"/>
    </location>
    <ligand>
        <name>GTP</name>
        <dbReference type="ChEBI" id="CHEBI:37565"/>
    </ligand>
</feature>
<feature type="binding site" evidence="1 2">
    <location>
        <position position="187"/>
    </location>
    <ligand>
        <name>GTP</name>
        <dbReference type="ChEBI" id="CHEBI:37565"/>
    </ligand>
</feature>
<feature type="mutagenesis site" description="Reduces motility. Does not form rods. No division defect." evidence="2">
    <original>E</original>
    <variation>A</variation>
    <location>
        <position position="218"/>
    </location>
</feature>
<feature type="strand" evidence="7">
    <location>
        <begin position="3"/>
        <end position="8"/>
    </location>
</feature>
<feature type="helix" evidence="7">
    <location>
        <begin position="9"/>
        <end position="26"/>
    </location>
</feature>
<feature type="strand" evidence="7">
    <location>
        <begin position="31"/>
        <end position="40"/>
    </location>
</feature>
<feature type="helix" evidence="7">
    <location>
        <begin position="41"/>
        <end position="45"/>
    </location>
</feature>
<feature type="strand" evidence="7">
    <location>
        <begin position="48"/>
        <end position="50"/>
    </location>
</feature>
<feature type="helix" evidence="7">
    <location>
        <begin position="52"/>
        <end position="54"/>
    </location>
</feature>
<feature type="strand" evidence="7">
    <location>
        <begin position="55"/>
        <end position="57"/>
    </location>
</feature>
<feature type="helix" evidence="7">
    <location>
        <begin position="60"/>
        <end position="63"/>
    </location>
</feature>
<feature type="helix" evidence="7">
    <location>
        <begin position="72"/>
        <end position="81"/>
    </location>
</feature>
<feature type="helix" evidence="7">
    <location>
        <begin position="83"/>
        <end position="90"/>
    </location>
</feature>
<feature type="helix" evidence="7">
    <location>
        <begin position="95"/>
        <end position="97"/>
    </location>
</feature>
<feature type="strand" evidence="7">
    <location>
        <begin position="99"/>
        <end position="110"/>
    </location>
</feature>
<feature type="helix" evidence="7">
    <location>
        <begin position="111"/>
        <end position="126"/>
    </location>
</feature>
<feature type="strand" evidence="7">
    <location>
        <begin position="131"/>
        <end position="137"/>
    </location>
</feature>
<feature type="helix" evidence="7">
    <location>
        <begin position="144"/>
        <end position="160"/>
    </location>
</feature>
<feature type="strand" evidence="7">
    <location>
        <begin position="161"/>
        <end position="168"/>
    </location>
</feature>
<feature type="helix" evidence="7">
    <location>
        <begin position="169"/>
        <end position="172"/>
    </location>
</feature>
<feature type="helix" evidence="7">
    <location>
        <begin position="179"/>
        <end position="198"/>
    </location>
</feature>
<feature type="helix" evidence="7">
    <location>
        <begin position="216"/>
        <end position="223"/>
    </location>
</feature>
<feature type="strand" evidence="7">
    <location>
        <begin position="227"/>
        <end position="237"/>
    </location>
</feature>
<feature type="helix" evidence="7">
    <location>
        <begin position="265"/>
        <end position="280"/>
    </location>
</feature>
<feature type="strand" evidence="7">
    <location>
        <begin position="293"/>
        <end position="301"/>
    </location>
</feature>
<feature type="helix" evidence="7">
    <location>
        <begin position="303"/>
        <end position="305"/>
    </location>
</feature>
<feature type="helix" evidence="7">
    <location>
        <begin position="308"/>
        <end position="322"/>
    </location>
</feature>
<feature type="strand" evidence="7">
    <location>
        <begin position="325"/>
        <end position="333"/>
    </location>
</feature>
<feature type="strand" evidence="7">
    <location>
        <begin position="339"/>
        <end position="348"/>
    </location>
</feature>
<feature type="helix" evidence="7">
    <location>
        <begin position="353"/>
        <end position="366"/>
    </location>
</feature>
<protein>
    <recommendedName>
        <fullName evidence="4">Tubulin-like protein CetZ1</fullName>
    </recommendedName>
    <alternativeName>
        <fullName evidence="3">Cell-structure-related euryarchaeota tubulin/FtsZ homolog 1</fullName>
    </alternativeName>
</protein>
<sequence length="395" mass="42064">MKLAMIGFGQAGGKVVDKFVEYDRERNAGIVRAAVAVNSAKADLLGLKNIPKDQRVLIGQSRVKGHGVGADNELGAEIAEEDIDEVQGAIDSIPVHEVDAFLVVSGLGGGTGSGGAPVLAKHLKRIYTEPVYGLGILPGSDEGGIYTLNAARSFQTFVREVDNLLVFDNDAWRKTGESVQGGYDEINEEIVNRFGVLFGAGEVQDGQEVAESVVDSSEIINTLAGGGVSTVGYASEGVEPRKNNGGGLLSRLTGGDEPDDNLDTAHTTNRITSLVRKAALGRLTLPCEIEGAERALLVLAGPPEHLNRKGIERGRKWIEEQTGSMEVRGGDYPIPGAEKVAGVILLSGVTNVPRIKELQQVAIEAQDNIEEIRQESDSNLETLINDDEDELESLF</sequence>
<evidence type="ECO:0000255" key="1">
    <source>
        <dbReference type="HAMAP-Rule" id="MF_01946"/>
    </source>
</evidence>
<evidence type="ECO:0000269" key="2">
    <source>
    </source>
</evidence>
<evidence type="ECO:0000303" key="3">
    <source>
    </source>
</evidence>
<evidence type="ECO:0000305" key="4"/>
<evidence type="ECO:0000312" key="5">
    <source>
        <dbReference type="EMBL" id="ADE04578.1"/>
    </source>
</evidence>
<evidence type="ECO:0000312" key="6">
    <source>
        <dbReference type="EMBL" id="ELY33433.1"/>
    </source>
</evidence>
<evidence type="ECO:0007829" key="7">
    <source>
        <dbReference type="PDB" id="4B46"/>
    </source>
</evidence>
<organism>
    <name type="scientific">Haloferax volcanii (strain ATCC 29605 / DSM 3757 / JCM 8879 / NBRC 14742 / NCIMB 2012 / VKM B-1768 / DS2)</name>
    <name type="common">Halobacterium volcanii</name>
    <dbReference type="NCBI Taxonomy" id="309800"/>
    <lineage>
        <taxon>Archaea</taxon>
        <taxon>Methanobacteriati</taxon>
        <taxon>Methanobacteriota</taxon>
        <taxon>Stenosarchaea group</taxon>
        <taxon>Halobacteria</taxon>
        <taxon>Halobacteriales</taxon>
        <taxon>Haloferacaceae</taxon>
        <taxon>Haloferax</taxon>
    </lineage>
</organism>
<comment type="function">
    <text evidence="2">Involved in cell shape control. Essential for the development of a rod-shaped cell type required for efficient swimming.</text>
</comment>
<comment type="subcellular location">
    <subcellularLocation>
        <location evidence="1 2">Cytoplasm</location>
    </subcellularLocation>
    <text evidence="2">In plates, seen throughout the cytoplasm. Localized as spots, short filaments at or near the envelope. In motile rods, localized at or near one or both poles, as spots, short filaments or end-caps, and at mid-cell.</text>
</comment>
<comment type="disruption phenotype">
    <text evidence="2">Swimming defect. No differences in growth rate or cell size.</text>
</comment>
<comment type="similarity">
    <text evidence="1 4">Belongs to the CetZ family.</text>
</comment>
<name>CETZ1_HALVD</name>
<reference key="1">
    <citation type="journal article" date="2010" name="PLoS ONE">
        <title>The complete genome sequence of Haloferax volcanii DS2, a model archaeon.</title>
        <authorList>
            <person name="Hartman A.L."/>
            <person name="Norais C."/>
            <person name="Badger J.H."/>
            <person name="Delmas S."/>
            <person name="Haldenby S."/>
            <person name="Madupu R."/>
            <person name="Robinson J."/>
            <person name="Khouri H."/>
            <person name="Ren Q."/>
            <person name="Lowe T.M."/>
            <person name="Maupin-Furlow J."/>
            <person name="Pohlschroder M."/>
            <person name="Daniels C."/>
            <person name="Pfeiffer F."/>
            <person name="Allers T."/>
            <person name="Eisen J.A."/>
        </authorList>
    </citation>
    <scope>NUCLEOTIDE SEQUENCE [LARGE SCALE GENOMIC DNA]</scope>
    <source>
        <strain>ATCC 29605 / DSM 3757 / JCM 8879 / NBRC 14742 / NCIMB 2012 / VKM B-1768 / DS2</strain>
    </source>
</reference>
<reference key="2">
    <citation type="journal article" date="2014" name="PLoS Genet.">
        <title>Phylogenetically driven sequencing of extremely halophilic archaea reveals strategies for static and dynamic osmo-response.</title>
        <authorList>
            <person name="Becker E.A."/>
            <person name="Seitzer P.M."/>
            <person name="Tritt A."/>
            <person name="Larsen D."/>
            <person name="Krusor M."/>
            <person name="Yao A.I."/>
            <person name="Wu D."/>
            <person name="Madern D."/>
            <person name="Eisen J.A."/>
            <person name="Darling A.E."/>
            <person name="Facciotti M.T."/>
        </authorList>
    </citation>
    <scope>NUCLEOTIDE SEQUENCE [LARGE SCALE GENOMIC DNA]</scope>
    <source>
        <strain>ATCC 29605 / DSM 3757 / JCM 8879 / NBRC 14742 / NCIMB 2012 / VKM B-1768 / DS2</strain>
    </source>
</reference>
<reference key="3">
    <citation type="journal article" date="2015" name="Nature">
        <title>CetZ tubulin-like proteins control archaeal cell shape.</title>
        <authorList>
            <person name="Duggin I.G."/>
            <person name="Aylett C.H."/>
            <person name="Walsh J.C."/>
            <person name="Michie K.A."/>
            <person name="Wang Q."/>
            <person name="Turnbull L."/>
            <person name="Dawson E.M."/>
            <person name="Harry E.J."/>
            <person name="Whitchurch C.B."/>
            <person name="Amos L.A."/>
            <person name="Loewe J."/>
        </authorList>
    </citation>
    <scope>X-RAY CRYSTALLOGRAPHY (1.90 ANGSTROMS) IN COMPLEX WITH GDP</scope>
    <scope>FUNCTION</scope>
    <scope>SUBCELLULAR LOCATION</scope>
    <scope>DISRUPTION PHENOTYPE</scope>
    <scope>MUTAGENESIS OF GLU-218</scope>
</reference>
<keyword id="KW-0002">3D-structure</keyword>
<keyword id="KW-0133">Cell shape</keyword>
<keyword id="KW-0963">Cytoplasm</keyword>
<keyword id="KW-0342">GTP-binding</keyword>
<keyword id="KW-0547">Nucleotide-binding</keyword>
<keyword id="KW-1185">Reference proteome</keyword>